<organism>
    <name type="scientific">Francisella tularensis subsp. mediasiatica (strain FSC147)</name>
    <dbReference type="NCBI Taxonomy" id="441952"/>
    <lineage>
        <taxon>Bacteria</taxon>
        <taxon>Pseudomonadati</taxon>
        <taxon>Pseudomonadota</taxon>
        <taxon>Gammaproteobacteria</taxon>
        <taxon>Thiotrichales</taxon>
        <taxon>Francisellaceae</taxon>
        <taxon>Francisella</taxon>
    </lineage>
</organism>
<protein>
    <recommendedName>
        <fullName evidence="1">DNA-directed RNA polymerase subunit beta</fullName>
        <shortName evidence="1">RNAP subunit beta</shortName>
        <ecNumber evidence="1">2.7.7.6</ecNumber>
    </recommendedName>
    <alternativeName>
        <fullName evidence="1">RNA polymerase subunit beta</fullName>
    </alternativeName>
    <alternativeName>
        <fullName evidence="1">Transcriptase subunit beta</fullName>
    </alternativeName>
</protein>
<name>RPOB_FRATM</name>
<accession>B2SFD6</accession>
<gene>
    <name evidence="1" type="primary">rpoB</name>
    <name type="ordered locus">FTM_0209</name>
</gene>
<reference key="1">
    <citation type="journal article" date="2009" name="PLoS Pathog.">
        <title>Molecular evolutionary consequences of niche restriction in Francisella tularensis, a facultative intracellular pathogen.</title>
        <authorList>
            <person name="Larsson P."/>
            <person name="Elfsmark D."/>
            <person name="Svensson K."/>
            <person name="Wikstroem P."/>
            <person name="Forsman M."/>
            <person name="Brettin T."/>
            <person name="Keim P."/>
            <person name="Johansson A."/>
        </authorList>
    </citation>
    <scope>NUCLEOTIDE SEQUENCE [LARGE SCALE GENOMIC DNA]</scope>
    <source>
        <strain>FSC147</strain>
    </source>
</reference>
<comment type="function">
    <text evidence="1">DNA-dependent RNA polymerase catalyzes the transcription of DNA into RNA using the four ribonucleoside triphosphates as substrates.</text>
</comment>
<comment type="catalytic activity">
    <reaction evidence="1">
        <text>RNA(n) + a ribonucleoside 5'-triphosphate = RNA(n+1) + diphosphate</text>
        <dbReference type="Rhea" id="RHEA:21248"/>
        <dbReference type="Rhea" id="RHEA-COMP:14527"/>
        <dbReference type="Rhea" id="RHEA-COMP:17342"/>
        <dbReference type="ChEBI" id="CHEBI:33019"/>
        <dbReference type="ChEBI" id="CHEBI:61557"/>
        <dbReference type="ChEBI" id="CHEBI:140395"/>
        <dbReference type="EC" id="2.7.7.6"/>
    </reaction>
</comment>
<comment type="subunit">
    <text evidence="1">The RNAP catalytic core consists of 2 alpha, 1 beta, 1 beta' and 1 omega subunit. When a sigma factor is associated with the core the holoenzyme is formed, which can initiate transcription.</text>
</comment>
<comment type="similarity">
    <text evidence="1">Belongs to the RNA polymerase beta chain family.</text>
</comment>
<proteinExistence type="inferred from homology"/>
<sequence>MSYSYAEKKRIRKEFGVLPHILDVPYLLSIQTESYKKFLTADAAKGRLHSGLEIVLKQSFPVESKNGQYELHYVDYQIGEPTFDETECQVRGATYDAPLNVKLRLVVYNKDALPNEKIVEDIREEYVYMGDIPLMTTNGTFIINGTERVVVSQLHRSPGVFFSKDDSEEGAFSARIIPYRGSWLDFEFDSKGIIWARIDRKRKFCATVILKALGYTQEQILENFSESKTITSNSKGFALRLDSLSNMKGELLKFDIVDAQDYVIVKKNKKLTSRDVKKIKDAGVDSVAIDFDLVSTLRVAKDIVNEATGEVIAYANDDVTESLLESCVEVGLLELEVIDFITTERGRYISDTLKYDLTRNTDEALVEIYKVLRPGDPPAAASVKALFEGLFFIESRYSLSDIGRMKLNARLGSDKVSKDIYTLENSDIVGVIEELINIRDGKGKVDDIDHLGNRRVRSVGEMVENQFRIGLYRVEKGIRESMSLVHKDKLMPKDIVNSKPITAAIKEFFTSGALSQFMDQDNPLSEVTHKRRISALGPGGLSRDRAGFEVRDVHATHYGRLCPIETPEGPNIGLINSLASYARVNDYGFLEAPYRKVVDGKVTDEIEYLSAIDEDNYVIAQASTKLDENNYFVEDLIQCRSGGEAIFTESSRVQYMDVSAKQMVSAAAALIPFLEHDDANRVLMGANMQRQAVPTLKSEKPLVGTGMEKIVARDSGNCIIARNAGEVAEVDSNRIVIKVDTEKSQTSNLVDIYSLTKFKRSNKNTCINQRPIVNVGDKVEAGDILADGFAADFGELSLGHNLMVAFMPWNGYNFEDSILLSERIVKDDKYTSIHIEEFTCVARDTKLGPEEITADIPNVSESSLAKLDESGIVHIGANVEAGDILVAKITPKAEQQLTPEERLLRAIFNEKASNVADSSLRMPSGTSGTVINVQVFENDKGGKSKRALKIEKELIDKARKDFDEEFAVIESVVKSSIEQEVVGAKIQKAKGLKKGAILTKEFLATLPFSKWLEISFEDEKLEEKVQNAREYYEEAKIAIDAKFEAKKKSITQSNELSPGVLKTVKVFVAIKKRIQPGDKMAGRHGNKGVVSRVLPVEDMPYMEDGTPVDVCLNPLGIPSRMNIGQILEAHLGLASYGLGKKIEKTLEKTRKAAELRKTLEEIYNSVGDKKVNLEALNDEEILTLCDNLKGGVPIATPVFDGAKEEDIKSLLKIGGFATNGQMKLFDGRTGKPFDRHVTVGYMYMLKLDHLVDDKMHARSTGSYSLVTQQPLGGKAQFGGQRFGEMEVWALQAYGAAYTLREMLTVKSDDIAGRSKMYKNIVDGKLTMNVDVPESFNVLRNEVRALGIDMDFDYSSEEE</sequence>
<feature type="chain" id="PRO_1000141698" description="DNA-directed RNA polymerase subunit beta">
    <location>
        <begin position="1"/>
        <end position="1358"/>
    </location>
</feature>
<evidence type="ECO:0000255" key="1">
    <source>
        <dbReference type="HAMAP-Rule" id="MF_01321"/>
    </source>
</evidence>
<dbReference type="EC" id="2.7.7.6" evidence="1"/>
<dbReference type="EMBL" id="CP000915">
    <property type="protein sequence ID" value="ACD30289.1"/>
    <property type="molecule type" value="Genomic_DNA"/>
</dbReference>
<dbReference type="SMR" id="B2SFD6"/>
<dbReference type="KEGG" id="ftm:FTM_0209"/>
<dbReference type="HOGENOM" id="CLU_000524_4_1_6"/>
<dbReference type="GO" id="GO:0000428">
    <property type="term" value="C:DNA-directed RNA polymerase complex"/>
    <property type="evidence" value="ECO:0007669"/>
    <property type="project" value="UniProtKB-KW"/>
</dbReference>
<dbReference type="GO" id="GO:0003677">
    <property type="term" value="F:DNA binding"/>
    <property type="evidence" value="ECO:0007669"/>
    <property type="project" value="UniProtKB-UniRule"/>
</dbReference>
<dbReference type="GO" id="GO:0003899">
    <property type="term" value="F:DNA-directed RNA polymerase activity"/>
    <property type="evidence" value="ECO:0007669"/>
    <property type="project" value="UniProtKB-UniRule"/>
</dbReference>
<dbReference type="GO" id="GO:0032549">
    <property type="term" value="F:ribonucleoside binding"/>
    <property type="evidence" value="ECO:0007669"/>
    <property type="project" value="InterPro"/>
</dbReference>
<dbReference type="GO" id="GO:0006351">
    <property type="term" value="P:DNA-templated transcription"/>
    <property type="evidence" value="ECO:0007669"/>
    <property type="project" value="UniProtKB-UniRule"/>
</dbReference>
<dbReference type="CDD" id="cd00653">
    <property type="entry name" value="RNA_pol_B_RPB2"/>
    <property type="match status" value="1"/>
</dbReference>
<dbReference type="FunFam" id="3.90.1800.10:FF:000001">
    <property type="entry name" value="DNA-directed RNA polymerase subunit beta"/>
    <property type="match status" value="1"/>
</dbReference>
<dbReference type="Gene3D" id="2.40.50.100">
    <property type="match status" value="1"/>
</dbReference>
<dbReference type="Gene3D" id="2.40.50.150">
    <property type="match status" value="1"/>
</dbReference>
<dbReference type="Gene3D" id="3.90.1100.10">
    <property type="match status" value="3"/>
</dbReference>
<dbReference type="Gene3D" id="2.40.270.10">
    <property type="entry name" value="DNA-directed RNA polymerase, subunit 2, domain 6"/>
    <property type="match status" value="1"/>
</dbReference>
<dbReference type="Gene3D" id="3.90.1800.10">
    <property type="entry name" value="RNA polymerase alpha subunit dimerisation domain"/>
    <property type="match status" value="1"/>
</dbReference>
<dbReference type="Gene3D" id="3.90.1110.10">
    <property type="entry name" value="RNA polymerase Rpb2, domain 2"/>
    <property type="match status" value="1"/>
</dbReference>
<dbReference type="HAMAP" id="MF_01321">
    <property type="entry name" value="RNApol_bact_RpoB"/>
    <property type="match status" value="1"/>
</dbReference>
<dbReference type="InterPro" id="IPR019462">
    <property type="entry name" value="DNA-dir_RNA_pol_bsu_external_1"/>
</dbReference>
<dbReference type="InterPro" id="IPR015712">
    <property type="entry name" value="DNA-dir_RNA_pol_su2"/>
</dbReference>
<dbReference type="InterPro" id="IPR007120">
    <property type="entry name" value="DNA-dir_RNAP_su2_dom"/>
</dbReference>
<dbReference type="InterPro" id="IPR037033">
    <property type="entry name" value="DNA-dir_RNAP_su2_hyb_sf"/>
</dbReference>
<dbReference type="InterPro" id="IPR010243">
    <property type="entry name" value="RNA_pol_bsu_bac"/>
</dbReference>
<dbReference type="InterPro" id="IPR007121">
    <property type="entry name" value="RNA_pol_bsu_CS"/>
</dbReference>
<dbReference type="InterPro" id="IPR007644">
    <property type="entry name" value="RNA_pol_bsu_protrusion"/>
</dbReference>
<dbReference type="InterPro" id="IPR007642">
    <property type="entry name" value="RNA_pol_Rpb2_2"/>
</dbReference>
<dbReference type="InterPro" id="IPR037034">
    <property type="entry name" value="RNA_pol_Rpb2_2_sf"/>
</dbReference>
<dbReference type="InterPro" id="IPR007645">
    <property type="entry name" value="RNA_pol_Rpb2_3"/>
</dbReference>
<dbReference type="InterPro" id="IPR007641">
    <property type="entry name" value="RNA_pol_Rpb2_7"/>
</dbReference>
<dbReference type="InterPro" id="IPR014724">
    <property type="entry name" value="RNA_pol_RPB2_OB-fold"/>
</dbReference>
<dbReference type="NCBIfam" id="NF001616">
    <property type="entry name" value="PRK00405.1"/>
    <property type="match status" value="1"/>
</dbReference>
<dbReference type="NCBIfam" id="TIGR02013">
    <property type="entry name" value="rpoB"/>
    <property type="match status" value="1"/>
</dbReference>
<dbReference type="PANTHER" id="PTHR20856">
    <property type="entry name" value="DNA-DIRECTED RNA POLYMERASE I SUBUNIT 2"/>
    <property type="match status" value="1"/>
</dbReference>
<dbReference type="Pfam" id="PF04563">
    <property type="entry name" value="RNA_pol_Rpb2_1"/>
    <property type="match status" value="1"/>
</dbReference>
<dbReference type="Pfam" id="PF04561">
    <property type="entry name" value="RNA_pol_Rpb2_2"/>
    <property type="match status" value="2"/>
</dbReference>
<dbReference type="Pfam" id="PF04565">
    <property type="entry name" value="RNA_pol_Rpb2_3"/>
    <property type="match status" value="1"/>
</dbReference>
<dbReference type="Pfam" id="PF10385">
    <property type="entry name" value="RNA_pol_Rpb2_45"/>
    <property type="match status" value="1"/>
</dbReference>
<dbReference type="Pfam" id="PF00562">
    <property type="entry name" value="RNA_pol_Rpb2_6"/>
    <property type="match status" value="1"/>
</dbReference>
<dbReference type="Pfam" id="PF04560">
    <property type="entry name" value="RNA_pol_Rpb2_7"/>
    <property type="match status" value="1"/>
</dbReference>
<dbReference type="SUPFAM" id="SSF64484">
    <property type="entry name" value="beta and beta-prime subunits of DNA dependent RNA-polymerase"/>
    <property type="match status" value="1"/>
</dbReference>
<dbReference type="PROSITE" id="PS01166">
    <property type="entry name" value="RNA_POL_BETA"/>
    <property type="match status" value="1"/>
</dbReference>
<keyword id="KW-0240">DNA-directed RNA polymerase</keyword>
<keyword id="KW-0548">Nucleotidyltransferase</keyword>
<keyword id="KW-0804">Transcription</keyword>
<keyword id="KW-0808">Transferase</keyword>